<feature type="signal peptide" evidence="1">
    <location>
        <begin position="1"/>
        <end position="32"/>
    </location>
</feature>
<feature type="chain" id="PRO_0000339339" description="Uncharacterized alpha-1,2-galactosyltransferase C8D2.17">
    <location>
        <begin position="33"/>
        <end position="328"/>
    </location>
</feature>
<keyword id="KW-0256">Endoplasmic reticulum</keyword>
<keyword id="KW-0328">Glycosyltransferase</keyword>
<keyword id="KW-1185">Reference proteome</keyword>
<keyword id="KW-0732">Signal</keyword>
<keyword id="KW-0808">Transferase</keyword>
<protein>
    <recommendedName>
        <fullName>Uncharacterized alpha-1,2-galactosyltransferase C8D2.17</fullName>
        <ecNumber>2.4.1.-</ecNumber>
    </recommendedName>
</protein>
<proteinExistence type="inferred from homology"/>
<reference key="1">
    <citation type="journal article" date="2000" name="Yeast">
        <title>A 38 kb segment containing the cdc2 gene from the left arm of fission yeast chromosome II: sequence analysis and characterization of the genomic DNA and cDNAs encoded on the segment.</title>
        <authorList>
            <person name="Machida M."/>
            <person name="Yamazaki S."/>
            <person name="Kunihiro S."/>
            <person name="Tanaka T."/>
            <person name="Kushida N."/>
            <person name="Jinno K."/>
            <person name="Haikawa Y."/>
            <person name="Yamazaki J."/>
            <person name="Yamamoto S."/>
            <person name="Sekine M."/>
            <person name="Oguchi A."/>
            <person name="Nagai Y."/>
            <person name="Sakai M."/>
            <person name="Aoki K."/>
            <person name="Ogura K."/>
            <person name="Kudoh Y."/>
            <person name="Kikuchi H."/>
            <person name="Zhang M.Q."/>
            <person name="Yanagida M."/>
        </authorList>
    </citation>
    <scope>NUCLEOTIDE SEQUENCE [LARGE SCALE GENOMIC DNA]</scope>
    <source>
        <strain>972 / ATCC 24843</strain>
    </source>
</reference>
<reference key="2">
    <citation type="journal article" date="2002" name="Nature">
        <title>The genome sequence of Schizosaccharomyces pombe.</title>
        <authorList>
            <person name="Wood V."/>
            <person name="Gwilliam R."/>
            <person name="Rajandream M.A."/>
            <person name="Lyne M.H."/>
            <person name="Lyne R."/>
            <person name="Stewart A."/>
            <person name="Sgouros J.G."/>
            <person name="Peat N."/>
            <person name="Hayles J."/>
            <person name="Baker S.G."/>
            <person name="Basham D."/>
            <person name="Bowman S."/>
            <person name="Brooks K."/>
            <person name="Brown D."/>
            <person name="Brown S."/>
            <person name="Chillingworth T."/>
            <person name="Churcher C.M."/>
            <person name="Collins M."/>
            <person name="Connor R."/>
            <person name="Cronin A."/>
            <person name="Davis P."/>
            <person name="Feltwell T."/>
            <person name="Fraser A."/>
            <person name="Gentles S."/>
            <person name="Goble A."/>
            <person name="Hamlin N."/>
            <person name="Harris D.E."/>
            <person name="Hidalgo J."/>
            <person name="Hodgson G."/>
            <person name="Holroyd S."/>
            <person name="Hornsby T."/>
            <person name="Howarth S."/>
            <person name="Huckle E.J."/>
            <person name="Hunt S."/>
            <person name="Jagels K."/>
            <person name="James K.D."/>
            <person name="Jones L."/>
            <person name="Jones M."/>
            <person name="Leather S."/>
            <person name="McDonald S."/>
            <person name="McLean J."/>
            <person name="Mooney P."/>
            <person name="Moule S."/>
            <person name="Mungall K.L."/>
            <person name="Murphy L.D."/>
            <person name="Niblett D."/>
            <person name="Odell C."/>
            <person name="Oliver K."/>
            <person name="O'Neil S."/>
            <person name="Pearson D."/>
            <person name="Quail M.A."/>
            <person name="Rabbinowitsch E."/>
            <person name="Rutherford K.M."/>
            <person name="Rutter S."/>
            <person name="Saunders D."/>
            <person name="Seeger K."/>
            <person name="Sharp S."/>
            <person name="Skelton J."/>
            <person name="Simmonds M.N."/>
            <person name="Squares R."/>
            <person name="Squares S."/>
            <person name="Stevens K."/>
            <person name="Taylor K."/>
            <person name="Taylor R.G."/>
            <person name="Tivey A."/>
            <person name="Walsh S.V."/>
            <person name="Warren T."/>
            <person name="Whitehead S."/>
            <person name="Woodward J.R."/>
            <person name="Volckaert G."/>
            <person name="Aert R."/>
            <person name="Robben J."/>
            <person name="Grymonprez B."/>
            <person name="Weltjens I."/>
            <person name="Vanstreels E."/>
            <person name="Rieger M."/>
            <person name="Schaefer M."/>
            <person name="Mueller-Auer S."/>
            <person name="Gabel C."/>
            <person name="Fuchs M."/>
            <person name="Duesterhoeft A."/>
            <person name="Fritzc C."/>
            <person name="Holzer E."/>
            <person name="Moestl D."/>
            <person name="Hilbert H."/>
            <person name="Borzym K."/>
            <person name="Langer I."/>
            <person name="Beck A."/>
            <person name="Lehrach H."/>
            <person name="Reinhardt R."/>
            <person name="Pohl T.M."/>
            <person name="Eger P."/>
            <person name="Zimmermann W."/>
            <person name="Wedler H."/>
            <person name="Wambutt R."/>
            <person name="Purnelle B."/>
            <person name="Goffeau A."/>
            <person name="Cadieu E."/>
            <person name="Dreano S."/>
            <person name="Gloux S."/>
            <person name="Lelaure V."/>
            <person name="Mottier S."/>
            <person name="Galibert F."/>
            <person name="Aves S.J."/>
            <person name="Xiang Z."/>
            <person name="Hunt C."/>
            <person name="Moore K."/>
            <person name="Hurst S.M."/>
            <person name="Lucas M."/>
            <person name="Rochet M."/>
            <person name="Gaillardin C."/>
            <person name="Tallada V.A."/>
            <person name="Garzon A."/>
            <person name="Thode G."/>
            <person name="Daga R.R."/>
            <person name="Cruzado L."/>
            <person name="Jimenez J."/>
            <person name="Sanchez M."/>
            <person name="del Rey F."/>
            <person name="Benito J."/>
            <person name="Dominguez A."/>
            <person name="Revuelta J.L."/>
            <person name="Moreno S."/>
            <person name="Armstrong J."/>
            <person name="Forsburg S.L."/>
            <person name="Cerutti L."/>
            <person name="Lowe T."/>
            <person name="McCombie W.R."/>
            <person name="Paulsen I."/>
            <person name="Potashkin J."/>
            <person name="Shpakovski G.V."/>
            <person name="Ussery D."/>
            <person name="Barrell B.G."/>
            <person name="Nurse P."/>
        </authorList>
    </citation>
    <scope>NUCLEOTIDE SEQUENCE [LARGE SCALE GENOMIC DNA]</scope>
    <source>
        <strain>972 / ATCC 24843</strain>
    </source>
</reference>
<reference key="3">
    <citation type="journal article" date="2000" name="Genes Cells">
        <title>Large-scale screening of intracellular protein localization in living fission yeast cells by the use of a GFP-fusion genomic DNA library.</title>
        <authorList>
            <person name="Ding D.-Q."/>
            <person name="Tomita Y."/>
            <person name="Yamamoto A."/>
            <person name="Chikashige Y."/>
            <person name="Haraguchi T."/>
            <person name="Hiraoka Y."/>
        </authorList>
    </citation>
    <scope>NUCLEOTIDE SEQUENCE [LARGE SCALE GENOMIC DNA] OF 1-95</scope>
    <source>
        <strain>ATCC 38364 / 968</strain>
    </source>
</reference>
<reference key="4">
    <citation type="journal article" date="2006" name="Nat. Biotechnol.">
        <title>ORFeome cloning and global analysis of protein localization in the fission yeast Schizosaccharomyces pombe.</title>
        <authorList>
            <person name="Matsuyama A."/>
            <person name="Arai R."/>
            <person name="Yashiroda Y."/>
            <person name="Shirai A."/>
            <person name="Kamata A."/>
            <person name="Sekido S."/>
            <person name="Kobayashi Y."/>
            <person name="Hashimoto A."/>
            <person name="Hamamoto M."/>
            <person name="Hiraoka Y."/>
            <person name="Horinouchi S."/>
            <person name="Yoshida M."/>
        </authorList>
    </citation>
    <scope>SUBCELLULAR LOCATION [LARGE SCALE ANALYSIS]</scope>
</reference>
<sequence>MFNFRLFSRRGKSLGLLAIVLLLFGFYSLKSSMPVYSNSIGSPSAHSSSYKGVSKAKTSPQDPDSVVMLIVSFDDHYDSSRSDSSSVFLDKVLSDRTEYALRHGYTLVHKKARDIQARYGVYGTWSIIPALRETLAEYPDAGWIWLLDAKAVIMNPSESLKDRVLKPEKLSQHLLLNSPIDPLKNYIRTRRKMDPSDVFVITTSDYNGISTRSLLIKNNNFAPFLLDAWNEPLLKSAGFDQAERSALSHLLEAHNTILDHVALVSPKVLNSYTNSAVDLNYEEGDFLVILQDCENAAACERIFDNYYQQRKLPAIKKQLSEETVDEQS</sequence>
<evidence type="ECO:0000255" key="1"/>
<evidence type="ECO:0000269" key="2">
    <source>
    </source>
</evidence>
<evidence type="ECO:0000305" key="3"/>
<dbReference type="EC" id="2.4.1.-"/>
<dbReference type="EMBL" id="AB004537">
    <property type="protein sequence ID" value="BAA21428.1"/>
    <property type="status" value="ALT_SEQ"/>
    <property type="molecule type" value="Genomic_DNA"/>
</dbReference>
<dbReference type="EMBL" id="CU329671">
    <property type="protein sequence ID" value="CAA17832.2"/>
    <property type="molecule type" value="Genomic_DNA"/>
</dbReference>
<dbReference type="EMBL" id="AB027960">
    <property type="protein sequence ID" value="BAA87264.1"/>
    <property type="molecule type" value="Genomic_DNA"/>
</dbReference>
<dbReference type="PIR" id="T40762">
    <property type="entry name" value="T40762"/>
</dbReference>
<dbReference type="SMR" id="O13640"/>
<dbReference type="BioGRID" id="277764">
    <property type="interactions" value="69"/>
</dbReference>
<dbReference type="FunCoup" id="O13640">
    <property type="interactions" value="88"/>
</dbReference>
<dbReference type="STRING" id="284812.O13640"/>
<dbReference type="CAZy" id="GT34">
    <property type="family name" value="Glycosyltransferase Family 34"/>
</dbReference>
<dbReference type="PaxDb" id="4896-SPBC8D2.17.1"/>
<dbReference type="EnsemblFungi" id="SPBC8D2.17.1">
    <property type="protein sequence ID" value="SPBC8D2.17.1:pep"/>
    <property type="gene ID" value="SPBC8D2.17"/>
</dbReference>
<dbReference type="KEGG" id="spo:2541250"/>
<dbReference type="PomBase" id="SPBC8D2.17"/>
<dbReference type="VEuPathDB" id="FungiDB:SPBC8D2.17"/>
<dbReference type="eggNOG" id="KOG4748">
    <property type="taxonomic scope" value="Eukaryota"/>
</dbReference>
<dbReference type="HOGENOM" id="CLU_021434_2_1_1"/>
<dbReference type="InParanoid" id="O13640"/>
<dbReference type="OMA" id="DQDAYIM"/>
<dbReference type="PhylomeDB" id="O13640"/>
<dbReference type="PRO" id="PR:O13640"/>
<dbReference type="Proteomes" id="UP000002485">
    <property type="component" value="Chromosome II"/>
</dbReference>
<dbReference type="GO" id="GO:0005783">
    <property type="term" value="C:endoplasmic reticulum"/>
    <property type="evidence" value="ECO:0007005"/>
    <property type="project" value="PomBase"/>
</dbReference>
<dbReference type="GO" id="GO:0005794">
    <property type="term" value="C:Golgi apparatus"/>
    <property type="evidence" value="ECO:0000314"/>
    <property type="project" value="PomBase"/>
</dbReference>
<dbReference type="GO" id="GO:0000139">
    <property type="term" value="C:Golgi membrane"/>
    <property type="evidence" value="ECO:0000318"/>
    <property type="project" value="GO_Central"/>
</dbReference>
<dbReference type="GO" id="GO:0000136">
    <property type="term" value="C:mannan polymerase complex"/>
    <property type="evidence" value="ECO:0000318"/>
    <property type="project" value="GO_Central"/>
</dbReference>
<dbReference type="GO" id="GO:0000009">
    <property type="term" value="F:alpha-1,6-mannosyltransferase activity"/>
    <property type="evidence" value="ECO:0000318"/>
    <property type="project" value="GO_Central"/>
</dbReference>
<dbReference type="GO" id="GO:0006487">
    <property type="term" value="P:protein N-linked glycosylation"/>
    <property type="evidence" value="ECO:0000318"/>
    <property type="project" value="GO_Central"/>
</dbReference>
<dbReference type="FunFam" id="3.90.550.10:FF:000149">
    <property type="entry name" value="Alpha-1,6-mannosyltransferase subunit"/>
    <property type="match status" value="1"/>
</dbReference>
<dbReference type="Gene3D" id="3.90.550.10">
    <property type="entry name" value="Spore Coat Polysaccharide Biosynthesis Protein SpsA, Chain A"/>
    <property type="match status" value="1"/>
</dbReference>
<dbReference type="InterPro" id="IPR008630">
    <property type="entry name" value="Glyco_trans_34"/>
</dbReference>
<dbReference type="InterPro" id="IPR029044">
    <property type="entry name" value="Nucleotide-diphossugar_trans"/>
</dbReference>
<dbReference type="PANTHER" id="PTHR31306">
    <property type="entry name" value="ALPHA-1,6-MANNOSYLTRANSFERASE MNN11-RELATED"/>
    <property type="match status" value="1"/>
</dbReference>
<dbReference type="PANTHER" id="PTHR31306:SF10">
    <property type="entry name" value="ALPHA-1,6-MANNOSYLTRANSFERASE MNN11-RELATED"/>
    <property type="match status" value="1"/>
</dbReference>
<dbReference type="Pfam" id="PF05637">
    <property type="entry name" value="Glyco_transf_34"/>
    <property type="match status" value="1"/>
</dbReference>
<comment type="subcellular location">
    <subcellularLocation>
        <location evidence="2">Endoplasmic reticulum</location>
    </subcellularLocation>
</comment>
<comment type="similarity">
    <text evidence="3">Belongs to the glycosyltransferase 34 family.</text>
</comment>
<comment type="sequence caution" evidence="3">
    <conflict type="erroneous gene model prediction">
        <sequence resource="EMBL-CDS" id="BAA21428"/>
    </conflict>
</comment>
<accession>O13640</accession>
<accession>Q9UTW3</accession>
<organism>
    <name type="scientific">Schizosaccharomyces pombe (strain 972 / ATCC 24843)</name>
    <name type="common">Fission yeast</name>
    <dbReference type="NCBI Taxonomy" id="284812"/>
    <lineage>
        <taxon>Eukaryota</taxon>
        <taxon>Fungi</taxon>
        <taxon>Dikarya</taxon>
        <taxon>Ascomycota</taxon>
        <taxon>Taphrinomycotina</taxon>
        <taxon>Schizosaccharomycetes</taxon>
        <taxon>Schizosaccharomycetales</taxon>
        <taxon>Schizosaccharomycetaceae</taxon>
        <taxon>Schizosaccharomyces</taxon>
    </lineage>
</organism>
<gene>
    <name type="ORF">pi048</name>
    <name type="ORF">SPBC8D2.17</name>
</gene>
<name>YGWH_SCHPO</name>